<evidence type="ECO:0000250" key="1"/>
<evidence type="ECO:0000255" key="2"/>
<evidence type="ECO:0000269" key="3">
    <source>
    </source>
</evidence>
<evidence type="ECO:0000305" key="4"/>
<reference key="1">
    <citation type="journal article" date="1994" name="Virology">
        <title>Isolation, cloning, and sequencing of simian foamy viruses from chimpanzees (SFVcpz): high homology to human foamy virus (HFV).</title>
        <authorList>
            <person name="Herchenroder O."/>
            <person name="Renne R."/>
            <person name="Loncar D."/>
            <person name="Cobb E.K."/>
            <person name="Murthy K.K."/>
            <person name="Schneider J."/>
            <person name="Mergia A."/>
            <person name="Luciw P.A."/>
        </authorList>
    </citation>
    <scope>NUCLEOTIDE SEQUENCE [GENOMIC DNA]</scope>
</reference>
<reference key="2">
    <citation type="journal article" date="2012" name="J. Biol. Chem.">
        <title>Foamy virus envelope protein is a substrate for signal peptide peptidase-like 3 (SPPL3).</title>
        <authorList>
            <person name="Voss M."/>
            <person name="Fukumori A."/>
            <person name="Kuhn P.H."/>
            <person name="Kunzel U."/>
            <person name="Klier B."/>
            <person name="Grammer G."/>
            <person name="Haug-Kroper M."/>
            <person name="Kremmer E."/>
            <person name="Lichtenthaler S.F."/>
            <person name="Steiner H."/>
            <person name="Schroder B."/>
            <person name="Haass C."/>
            <person name="Fluhrer R."/>
        </authorList>
    </citation>
    <scope>CLEAVAGE BY SPPL2A; SPPL2B AND SPPL3</scope>
    <scope>SUBCELLULAR LOCATION</scope>
    <scope>MUTAGENESIS OF ARG-123 AND ARG-126</scope>
</reference>
<dbReference type="EMBL" id="U04327">
    <property type="protein sequence ID" value="AAA19979.1"/>
    <property type="molecule type" value="Genomic_DNA"/>
</dbReference>
<dbReference type="RefSeq" id="NP_056804.1">
    <property type="nucleotide sequence ID" value="NC_001364.1"/>
</dbReference>
<dbReference type="SMR" id="Q87041"/>
<dbReference type="GlyCosmos" id="Q87041">
    <property type="glycosylation" value="14 sites, No reported glycans"/>
</dbReference>
<dbReference type="GeneID" id="1489966"/>
<dbReference type="KEGG" id="vg:1489966"/>
<dbReference type="Proteomes" id="UP000001063">
    <property type="component" value="Segment"/>
</dbReference>
<dbReference type="GO" id="GO:0044167">
    <property type="term" value="C:host cell endoplasmic reticulum membrane"/>
    <property type="evidence" value="ECO:0000314"/>
    <property type="project" value="UniProtKB"/>
</dbReference>
<dbReference type="GO" id="GO:0016020">
    <property type="term" value="C:membrane"/>
    <property type="evidence" value="ECO:0007669"/>
    <property type="project" value="UniProtKB-KW"/>
</dbReference>
<dbReference type="GO" id="GO:0019031">
    <property type="term" value="C:viral envelope"/>
    <property type="evidence" value="ECO:0007669"/>
    <property type="project" value="UniProtKB-KW"/>
</dbReference>
<dbReference type="GO" id="GO:0055036">
    <property type="term" value="C:virion membrane"/>
    <property type="evidence" value="ECO:0007669"/>
    <property type="project" value="UniProtKB-SubCell"/>
</dbReference>
<dbReference type="GO" id="GO:0002020">
    <property type="term" value="F:protease binding"/>
    <property type="evidence" value="ECO:0000353"/>
    <property type="project" value="UniProtKB"/>
</dbReference>
<dbReference type="InterPro" id="IPR005070">
    <property type="entry name" value="Foamy_env"/>
</dbReference>
<dbReference type="Pfam" id="PF03408">
    <property type="entry name" value="Foamy_virus_ENV"/>
    <property type="match status" value="1"/>
</dbReference>
<comment type="function">
    <text evidence="1">The surface protein (SU) attaches the virus to the host cell by binding to the cell receptor. This interaction triggers the refolding of transmembrane protein (TM) and is thought to activate its fusogenic potential by unmasking its fusion peptide (By similarity).</text>
</comment>
<comment type="function">
    <text evidence="1">The transmembrane protein (TM) acts as a class I viral fusion protein. Under the current model, the protein has at least 3 conformational states: pre-fusion native state, pre-hairpin intermediate state, and post-fusion hairpin state. During viral and target cell membrane fusion, the coiled coil regions (heptad repeats) assume a trimer-of-hairpins structure, positioning the fusion peptide in close proximity to the C-terminal region of the ectodomain. The formation of this structure appears to drive apposition and subsequent fusion of viral and target cell membranes. Membranes fusion leads to delivery of the nucleocapsid into the cytoplasm (By similarity).</text>
</comment>
<comment type="function">
    <text evidence="1">The leader peptide is a component of released, infectious virions and is required for particle budding.</text>
</comment>
<comment type="subunit">
    <text evidence="1">The mature envelope protein consists of a trimer of SU-TM heterodimers. The N-terminus of leader peptide specifically interacts with Gag protein (By similarity). This specific interaction between Gag protein and Env glycoprotein may allow particle egress.</text>
</comment>
<comment type="subcellular location">
    <molecule>Envelope glycoprotein gp130</molecule>
    <subcellularLocation>
        <location evidence="3">Host endoplasmic reticulum membrane</location>
    </subcellularLocation>
    <text evidence="1">The polyprotein has a highly unusual biosynthesis for a retroviral glycoprotein. It is translated as a full-length precursor protein into the rough endoplasmic reticulum and initially has a type III protein configuration with both its N and C-termini located intracytoplasmically (By similarity).</text>
</comment>
<comment type="subcellular location">
    <molecule>Leader peptide</molecule>
    <subcellularLocation>
        <location evidence="1">Virion membrane</location>
        <topology evidence="1">Single-pass type II membrane protein</topology>
    </subcellularLocation>
    <subcellularLocation>
        <location evidence="1">Host endoplasmic reticulum membrane</location>
        <topology evidence="1">Single-pass type II membrane protein</topology>
    </subcellularLocation>
    <text evidence="1">Its N-terminus is located inside the viral particle.</text>
</comment>
<comment type="subcellular location">
    <molecule>Transmembrane protein</molecule>
    <subcellularLocation>
        <location evidence="1">Virion membrane</location>
        <topology evidence="1">Single-pass type I membrane protein</topology>
    </subcellularLocation>
    <subcellularLocation>
        <location>Host endoplasmic reticulum membrane</location>
        <topology>Single-pass type I membrane protein</topology>
    </subcellularLocation>
</comment>
<comment type="subcellular location">
    <molecule>Surface protein</molecule>
    <subcellularLocation>
        <location evidence="1">Virion membrane</location>
        <topology evidence="1">Peripheral membrane protein</topology>
    </subcellularLocation>
    <subcellularLocation>
        <location>Host endoplasmic reticulum membrane</location>
        <topology>Peripheral membrane protein</topology>
    </subcellularLocation>
    <text evidence="4">The surface protein is not anchored to the viral envelope, but associates with the extravirion surface through its binding to TM.</text>
</comment>
<comment type="domain">
    <text>The ER retention signal plays an important role in establishing the intracellular site of budding.</text>
</comment>
<comment type="PTM">
    <text evidence="1 3">Envelope glycoproteins are synthesized as an inactive precursor that is processed by host furin or a furin-like proprotein convertase (PC)-mediated cleavage proteolysis to yield a functional heterooligomeric complex (By similarity). Further proteolytically processed through regulated intramembrane proteolysis either by SPPL2A and SPPL2B or by SPPL3 in a PC-mediated cleavage-dependent or -independent manner, respectively (PubMed:23132852).</text>
</comment>
<comment type="PTM">
    <text>The transmembrane protein and the surface protein are N-glycosylated.</text>
</comment>
<comment type="PTM">
    <text>Mono- and polyubiquitinated leader peptide are found in viral particles. Ubiquitination may be involved in regulating the balance between viral and subviral particles release.</text>
</comment>
<comment type="miscellaneous">
    <text>Foamy viruses are distinct from other retroviruses in many respects. Their protease is active as an uncleaved Pro-Pol protein. Mature particles do not include the usual processed retroviral structural protein (MA, CA and NC), but instead contain two large Gag proteins. Their functional nucleic acid appears to be either RNA or dsDNA (up to 20% of extracellular particles), because they probably proceed either to an early (before integration) or late reverse transcription (after assembly). Foamy viruses have the ability to retrotranspose intracellularly with high efficiency. They bud predominantly into the endoplasmic reticulum (ER) and occasionally at the plasma membrane. Budding requires the presence of Env proteins. Most viral particles probably remain within the infected cell.</text>
</comment>
<gene>
    <name type="primary">env</name>
</gene>
<feature type="chain" id="PRO_0000378587" description="Envelope glycoprotein gp130">
    <location>
        <begin position="1"/>
        <end position="988"/>
    </location>
</feature>
<feature type="chain" id="PRO_0000378588" description="Leader peptide" evidence="1">
    <location>
        <begin position="1"/>
        <end position="126"/>
    </location>
</feature>
<feature type="chain" id="PRO_0000378589" description="Surface protein" evidence="1">
    <location>
        <begin position="127"/>
        <end position="571"/>
    </location>
</feature>
<feature type="chain" id="PRO_0000378590" description="Transmembrane protein" evidence="1">
    <location>
        <begin position="572"/>
        <end position="988"/>
    </location>
</feature>
<feature type="topological domain" description="Cytoplasmic" evidence="2">
    <location>
        <begin position="1"/>
        <end position="65"/>
    </location>
</feature>
<feature type="transmembrane region" description="Helical; Signal-anchor for type III membrane protein" evidence="2">
    <location>
        <begin position="66"/>
        <end position="88"/>
    </location>
</feature>
<feature type="topological domain" description="Lumenal" evidence="2">
    <location>
        <begin position="89"/>
        <end position="960"/>
    </location>
</feature>
<feature type="transmembrane region" description="Helical" evidence="2">
    <location>
        <begin position="961"/>
        <end position="981"/>
    </location>
</feature>
<feature type="topological domain" description="Cytoplasmic" evidence="2">
    <location>
        <begin position="982"/>
        <end position="988"/>
    </location>
</feature>
<feature type="region of interest" description="Involved in virion budding" evidence="2">
    <location>
        <begin position="1"/>
        <end position="15"/>
    </location>
</feature>
<feature type="region of interest" description="Fusion peptide" evidence="1">
    <location>
        <begin position="576"/>
        <end position="598"/>
    </location>
</feature>
<feature type="short sequence motif" description="Endoplasmic reticulum retention signal" evidence="1">
    <location>
        <begin position="984"/>
        <end position="986"/>
    </location>
</feature>
<feature type="site" description="Cleavage; by host" evidence="1">
    <location>
        <begin position="126"/>
        <end position="127"/>
    </location>
</feature>
<feature type="site" description="Cleavage; by human protease SPPL3" evidence="3">
    <location>
        <begin position="126"/>
        <end position="127"/>
    </location>
</feature>
<feature type="site" description="Cleavage; by host" evidence="1">
    <location>
        <begin position="571"/>
        <end position="572"/>
    </location>
</feature>
<feature type="glycosylation site" description="N-linked (GlcNAc...) asparagine; by host" evidence="2">
    <location>
        <position position="109"/>
    </location>
</feature>
<feature type="glycosylation site" description="N-linked (GlcNAc...) asparagine; by host" evidence="2">
    <location>
        <position position="141"/>
    </location>
</feature>
<feature type="glycosylation site" description="N-linked (GlcNAc...) asparagine; by host" evidence="2">
    <location>
        <position position="183"/>
    </location>
</feature>
<feature type="glycosylation site" description="N-linked (GlcNAc...) asparagine; by host" evidence="2">
    <location>
        <position position="286"/>
    </location>
</feature>
<feature type="glycosylation site" description="N-linked (GlcNAc...) asparagine; by host" evidence="2">
    <location>
        <position position="311"/>
    </location>
</feature>
<feature type="glycosylation site" description="N-linked (GlcNAc...) asparagine; by host" evidence="2">
    <location>
        <position position="346"/>
    </location>
</feature>
<feature type="glycosylation site" description="N-linked (GlcNAc...) asparagine; by host" evidence="2">
    <location>
        <position position="391"/>
    </location>
</feature>
<feature type="glycosylation site" description="N-linked (GlcNAc...) asparagine; by host" evidence="2">
    <location>
        <position position="405"/>
    </location>
</feature>
<feature type="glycosylation site" description="N-linked (GlcNAc...) asparagine; by host" evidence="2">
    <location>
        <position position="423"/>
    </location>
</feature>
<feature type="glycosylation site" description="N-linked (GlcNAc...) asparagine; by host" evidence="2">
    <location>
        <position position="527"/>
    </location>
</feature>
<feature type="glycosylation site" description="N-linked (GlcNAc...) asparagine; by host" evidence="2">
    <location>
        <position position="556"/>
    </location>
</feature>
<feature type="glycosylation site" description="N-linked (GlcNAc...) asparagine; by host" evidence="2">
    <location>
        <position position="782"/>
    </location>
</feature>
<feature type="glycosylation site" description="N-linked (GlcNAc...) asparagine; by host" evidence="2">
    <location>
        <position position="808"/>
    </location>
</feature>
<feature type="glycosylation site" description="N-linked (GlcNAc...) asparagine; by host" evidence="2">
    <location>
        <position position="833"/>
    </location>
</feature>
<feature type="cross-link" description="Glycyl lysine isopeptide (Lys-Gly) (interchain with G-Cter in ubiquitin)" evidence="1">
    <location>
        <position position="15"/>
    </location>
</feature>
<feature type="cross-link" description="Glycyl lysine isopeptide (Lys-Gly) (interchain with G-Cter in ubiquitin)" evidence="1">
    <location>
        <position position="18"/>
    </location>
</feature>
<feature type="cross-link" description="Glycyl lysine isopeptide (Lys-Gly) (interchain with G-Cter in ubiquitin)" evidence="1">
    <location>
        <position position="34"/>
    </location>
</feature>
<feature type="cross-link" description="Glycyl lysine isopeptide (Lys-Gly) (interchain with G-Cter in ubiquitin)" evidence="1">
    <location>
        <position position="53"/>
    </location>
</feature>
<feature type="mutagenesis site" description="Loss of host furin or a furin-like protease activity; when associated with A-126. Does not affect subcellular localization; when associated with A-126." evidence="3">
    <original>R</original>
    <variation>A</variation>
    <location>
        <position position="123"/>
    </location>
</feature>
<feature type="mutagenesis site" description="Loss of host furin or a furin-like protease activity; when associated with A-123. Does not affect subcellular localization; when associated with A-126." evidence="3">
    <original>R</original>
    <variation>A</variation>
    <location>
        <position position="126"/>
    </location>
</feature>
<keyword id="KW-0165">Cleavage on pair of basic residues</keyword>
<keyword id="KW-0325">Glycoprotein</keyword>
<keyword id="KW-1038">Host endoplasmic reticulum</keyword>
<keyword id="KW-1043">Host membrane</keyword>
<keyword id="KW-1017">Isopeptide bond</keyword>
<keyword id="KW-0472">Membrane</keyword>
<keyword id="KW-1185">Reference proteome</keyword>
<keyword id="KW-0735">Signal-anchor</keyword>
<keyword id="KW-0812">Transmembrane</keyword>
<keyword id="KW-1133">Transmembrane helix</keyword>
<keyword id="KW-0832">Ubl conjugation</keyword>
<keyword id="KW-0261">Viral envelope protein</keyword>
<keyword id="KW-0946">Virion</keyword>
<protein>
    <recommendedName>
        <fullName>Envelope glycoprotein gp130</fullName>
    </recommendedName>
    <alternativeName>
        <fullName>Env polyprotein</fullName>
    </alternativeName>
    <component>
        <recommendedName>
            <fullName>Leader peptide</fullName>
            <shortName>LP</shortName>
        </recommendedName>
        <alternativeName>
            <fullName>Env leader protein</fullName>
            <shortName>Elp</shortName>
        </alternativeName>
        <alternativeName>
            <fullName>gp18LP</fullName>
        </alternativeName>
    </component>
    <component>
        <recommendedName>
            <fullName>Surface protein</fullName>
            <shortName>SU</shortName>
        </recommendedName>
        <alternativeName>
            <fullName>Glycoprotein 80</fullName>
            <shortName>gp80</shortName>
        </alternativeName>
    </component>
    <component>
        <recommendedName>
            <fullName>Transmembrane protein</fullName>
            <shortName>TM</shortName>
        </recommendedName>
        <alternativeName>
            <fullName>Glycoprotein 48</fullName>
            <shortName>gp48</shortName>
        </alternativeName>
    </component>
</protein>
<organismHost>
    <name type="scientific">Pan troglodytes</name>
    <name type="common">Chimpanzee</name>
    <dbReference type="NCBI Taxonomy" id="9598"/>
</organismHost>
<organism>
    <name type="scientific">Simian foamy virus (isolate chimpanzee)</name>
    <name type="common">SFVcpz</name>
    <dbReference type="NCBI Taxonomy" id="298339"/>
    <lineage>
        <taxon>Viruses</taxon>
        <taxon>Riboviria</taxon>
        <taxon>Pararnavirae</taxon>
        <taxon>Artverviricota</taxon>
        <taxon>Revtraviricetes</taxon>
        <taxon>Ortervirales</taxon>
        <taxon>Retroviridae</taxon>
        <taxon>Spumaretrovirinae</taxon>
        <taxon>Spumavirus</taxon>
        <taxon>Simian foamy virus</taxon>
    </lineage>
</organism>
<sequence>MAPPMTLQQWIIWNKMNKAHEALQNSTTVTDQQKEQIILEIQNEEVRPTRKDKIRYLLYTCCATSSRVLAWMLLVCVLLIVVLVSCFLTISRIQWNRDIQVLGPVIDWNVTQRAVYQPLQTRRIARSLRMQHPVPKYIEVNMTSIPQGVYYEPHPEPIVVTERVLGLSQVLMINSENIANNANLTQEVKKLLAEVVNEEMQSLSDVMIDFEIPLGDPRDQEQYIHRKCYQEFAHCYLVKYKTPKSWPTEGLIADQCPLPGYHAGLSYKPQSIWDYYIKVEITRPANWSSQAVYGQARLGSFYVPKGIRQNNYSHVLFCSDQLYSKWYNIENSIEQNEKFLLNKLDNLTTGSSLLKKRALPKEWSSQGKNALFKEINVLDVCSKPELVILLNTSYYSFSLWEGDCNFTKNMISQLVPECEGFYNNSKWMHMHPYACRFWRSKNEKEETKCRPGEKEKCLYYPYQDSLESTYDFGFLAYQKNFPAPICIEQQEIRDKDYEVYSLYQECKLASKVHGIDTVLFSLKNFLNHTGRPVNEMPNARAFVGLVDPKFPPSYPNVTREHYTSCNNRKRRSTDNNYAKLKSMGYALTGAVQTLSQISDINDENLQQGIYLLRDHVITLMEATLHDISVMEGMFAVQHLHTHLNHLKTMLLERRIDWTYMSSAWLQQQLQKSDDEMKVIKRIAKSLVYYVKQTYNSPTATAWEIGLYYELTIPKHVYLNNWNVVNIGHLVQSAGQLTHVTIAHPYEIINKECTETKYLHLKDCRRQDYVICDVVEIVQPCGNSTDTSDCPVWAEAVKEPFVQVNPLKNGSYLVLASSTDCQIPPYVPSIVTVNETTSCYGLNFKKPLVAEERLGFEPRLPNLQLRLPHLVGIIAKIKGLKIEVTSSGESIKDQIERAKAELLRLDIHEGDTPAWIQQLAAATKDVWPAAASALQGIGNFLSGAAHGIFGTAFSLLGYLKPILIGVGVILLIILIFKIVSWIPTKKKSQ</sequence>
<proteinExistence type="evidence at protein level"/>
<name>ENV_SFVCP</name>
<accession>Q87041</accession>